<reference key="1">
    <citation type="journal article" date="2005" name="Mol. Plant Pathol.">
        <title>Molecular and functional characterization of a secreted lipase from Botrytis cinerea.</title>
        <authorList>
            <person name="Reis H."/>
            <person name="Pfiffi S."/>
            <person name="Hahn M."/>
        </authorList>
    </citation>
    <scope>NUCLEOTIDE SEQUENCE [GENOMIC DNA]</scope>
    <scope>FUNCTION</scope>
    <scope>CATALYTIC ACTIVITY</scope>
    <scope>SUBSTRATE SPECIFICITY</scope>
    <scope>BIOPHYSICOCHEMICAL PROPERTIES</scope>
    <scope>SUBCELLULAR LOCATION</scope>
    <scope>DISRUPTION PHENOTYPE</scope>
    <scope>INDUCTION</scope>
    <source>
        <strain>B05.10</strain>
    </source>
</reference>
<reference key="2">
    <citation type="journal article" date="2011" name="PLoS Genet.">
        <title>Genomic analysis of the necrotrophic fungal pathogens Sclerotinia sclerotiorum and Botrytis cinerea.</title>
        <authorList>
            <person name="Amselem J."/>
            <person name="Cuomo C.A."/>
            <person name="van Kan J.A.L."/>
            <person name="Viaud M."/>
            <person name="Benito E.P."/>
            <person name="Couloux A."/>
            <person name="Coutinho P.M."/>
            <person name="de Vries R.P."/>
            <person name="Dyer P.S."/>
            <person name="Fillinger S."/>
            <person name="Fournier E."/>
            <person name="Gout L."/>
            <person name="Hahn M."/>
            <person name="Kohn L."/>
            <person name="Lapalu N."/>
            <person name="Plummer K.M."/>
            <person name="Pradier J.-M."/>
            <person name="Quevillon E."/>
            <person name="Sharon A."/>
            <person name="Simon A."/>
            <person name="ten Have A."/>
            <person name="Tudzynski B."/>
            <person name="Tudzynski P."/>
            <person name="Wincker P."/>
            <person name="Andrew M."/>
            <person name="Anthouard V."/>
            <person name="Beever R.E."/>
            <person name="Beffa R."/>
            <person name="Benoit I."/>
            <person name="Bouzid O."/>
            <person name="Brault B."/>
            <person name="Chen Z."/>
            <person name="Choquer M."/>
            <person name="Collemare J."/>
            <person name="Cotton P."/>
            <person name="Danchin E.G."/>
            <person name="Da Silva C."/>
            <person name="Gautier A."/>
            <person name="Giraud C."/>
            <person name="Giraud T."/>
            <person name="Gonzalez C."/>
            <person name="Grossetete S."/>
            <person name="Gueldener U."/>
            <person name="Henrissat B."/>
            <person name="Howlett B.J."/>
            <person name="Kodira C."/>
            <person name="Kretschmer M."/>
            <person name="Lappartient A."/>
            <person name="Leroch M."/>
            <person name="Levis C."/>
            <person name="Mauceli E."/>
            <person name="Neuveglise C."/>
            <person name="Oeser B."/>
            <person name="Pearson M."/>
            <person name="Poulain J."/>
            <person name="Poussereau N."/>
            <person name="Quesneville H."/>
            <person name="Rascle C."/>
            <person name="Schumacher J."/>
            <person name="Segurens B."/>
            <person name="Sexton A."/>
            <person name="Silva E."/>
            <person name="Sirven C."/>
            <person name="Soanes D.M."/>
            <person name="Talbot N.J."/>
            <person name="Templeton M."/>
            <person name="Yandava C."/>
            <person name="Yarden O."/>
            <person name="Zeng Q."/>
            <person name="Rollins J.A."/>
            <person name="Lebrun M.-H."/>
            <person name="Dickman M."/>
        </authorList>
    </citation>
    <scope>NUCLEOTIDE SEQUENCE [LARGE SCALE GENOMIC DNA]</scope>
    <source>
        <strain>B05.10</strain>
    </source>
</reference>
<reference key="3">
    <citation type="journal article" date="2012" name="Eukaryot. Cell">
        <title>Genome update of Botrytis cinerea strains B05.10 and T4.</title>
        <authorList>
            <person name="Staats M."/>
            <person name="van Kan J.A.L."/>
        </authorList>
    </citation>
    <scope>NUCLEOTIDE SEQUENCE [LARGE SCALE GENOMIC DNA]</scope>
    <source>
        <strain>B05.10</strain>
    </source>
</reference>
<reference key="4">
    <citation type="journal article" date="2017" name="Mol. Plant Pathol.">
        <title>A gapless genome sequence of the fungus Botrytis cinerea.</title>
        <authorList>
            <person name="van Kan J.A.L."/>
            <person name="Stassen J.H.M."/>
            <person name="Mosbach A."/>
            <person name="van der Lee T.A.J."/>
            <person name="Faino L."/>
            <person name="Farmer A.D."/>
            <person name="Papasotiriou D.G."/>
            <person name="Zhou S."/>
            <person name="Seidl M.F."/>
            <person name="Cottam E."/>
            <person name="Edel D."/>
            <person name="Hahn M."/>
            <person name="Schwartz D.C."/>
            <person name="Dietrich R.A."/>
            <person name="Widdison S."/>
            <person name="Scalliet G."/>
        </authorList>
    </citation>
    <scope>NUCLEOTIDE SEQUENCE [LARGE SCALE GENOMIC DNA]</scope>
    <source>
        <strain>B05.10</strain>
    </source>
</reference>
<reference key="5">
    <citation type="journal article" date="1995" name="Lipids">
        <title>Purification and properties of an extracellular lipase from the fungus Botrytis cinerea.</title>
        <authorList>
            <person name="Commenil P."/>
            <person name="Belingheri L."/>
            <person name="Sancholle M."/>
            <person name="Dehorter B."/>
        </authorList>
    </citation>
    <scope>FUNCTION</scope>
    <scope>CATALYTIC ACTIVITY</scope>
    <scope>BIOPHYSICOCHEMICAL PROPERTIES</scope>
    <scope>ACTIVITY REGULATION</scope>
    <scope>SUBCELLULAR LOCATION</scope>
</reference>
<evidence type="ECO:0000250" key="1">
    <source>
        <dbReference type="UniProtKB" id="P20261"/>
    </source>
</evidence>
<evidence type="ECO:0000255" key="2"/>
<evidence type="ECO:0000255" key="3">
    <source>
        <dbReference type="PROSITE-ProRule" id="PRU00498"/>
    </source>
</evidence>
<evidence type="ECO:0000255" key="4">
    <source>
        <dbReference type="PROSITE-ProRule" id="PRU10039"/>
    </source>
</evidence>
<evidence type="ECO:0000269" key="5">
    <source>
    </source>
</evidence>
<evidence type="ECO:0000269" key="6">
    <source>
    </source>
</evidence>
<evidence type="ECO:0000303" key="7">
    <source>
    </source>
</evidence>
<evidence type="ECO:0000305" key="8"/>
<sequence>MKLSLVPIFALLSTAFALPVENAERDVPIEERAAAPTVTIASPAATIIGGAGATVETFAGVPFAKPPVGALRLKPPQPITSALGTIKATAQAASCPQFFFSTTINDAIPTSALGLLLNTPVFQQVLNAGEDCLYLNIQRPVGTTASSKLPVLFWIFGGGFELGGTAMYDGSSWVAESIAEGKPIIFVQVAYRVGGFGFLPGAEILADGSANLGLLDQRLGLQWVADNIAAFGGDPSKVTIWGESAGAISVFDQMALYGGDNTYKGKSLFRGAIMNSGSIVPADPVDCPKGQIIYDNVVASAGCSAAANTLTCLRGVPYSTLLNATNSVPGLLSYSSIALSYLPRPDGTALTKSPDLLLASGNWAKVPFIIGDQEDEGTIFALFQSNISTTAQLTTYFSDFFFHNAPTSVLTGLLNTYPNDLISGSPFRTLLLNNWYPQFKRLAAILGDLTFTLTRRVFLKTALKVAPTVPSWSYLSSYDYGTPVLGTFHGSDILQVFNGIKPNYAASASKAYYLSFVNTLDPNNGTSSAYANWPQYSNGAQLLNLYASFGGFISDNFRSTSYDYIVANLPSFYI</sequence>
<gene>
    <name evidence="7" type="primary">lip1</name>
    <name type="ORF">BCIN_09g06880</name>
</gene>
<dbReference type="EC" id="3.1.1.1" evidence="4 5 6"/>
<dbReference type="EMBL" id="AY738714">
    <property type="protein sequence ID" value="AAU87359.1"/>
    <property type="molecule type" value="Genomic_DNA"/>
</dbReference>
<dbReference type="EMBL" id="CP009813">
    <property type="protein sequence ID" value="ATZ53935.1"/>
    <property type="molecule type" value="Genomic_DNA"/>
</dbReference>
<dbReference type="RefSeq" id="XP_001553224.1">
    <property type="nucleotide sequence ID" value="XM_001553174.1"/>
</dbReference>
<dbReference type="SMR" id="Q5XTQ4"/>
<dbReference type="ESTHER" id="botf1-m7u187">
    <property type="family name" value="Fungal_carboxylesterase_lipase"/>
</dbReference>
<dbReference type="EnsemblFungi" id="Bcin09g06880.1">
    <property type="protein sequence ID" value="Bcin09p06880.1"/>
    <property type="gene ID" value="Bcin09g06880"/>
</dbReference>
<dbReference type="KEGG" id="bfu:BCIN_09g06880"/>
<dbReference type="VEuPathDB" id="FungiDB:Bcin09g06880"/>
<dbReference type="OrthoDB" id="408631at2759"/>
<dbReference type="PHI-base" id="PHI:541"/>
<dbReference type="Proteomes" id="UP000001798">
    <property type="component" value="Chromosome bcin09"/>
</dbReference>
<dbReference type="GO" id="GO:0005576">
    <property type="term" value="C:extracellular region"/>
    <property type="evidence" value="ECO:0007669"/>
    <property type="project" value="UniProtKB-SubCell"/>
</dbReference>
<dbReference type="GO" id="GO:0106435">
    <property type="term" value="F:carboxylesterase activity"/>
    <property type="evidence" value="ECO:0007669"/>
    <property type="project" value="RHEA"/>
</dbReference>
<dbReference type="GO" id="GO:0016042">
    <property type="term" value="P:lipid catabolic process"/>
    <property type="evidence" value="ECO:0007669"/>
    <property type="project" value="UniProtKB-KW"/>
</dbReference>
<dbReference type="FunFam" id="3.40.50.1820:FF:000213">
    <property type="entry name" value="Carboxylic ester hydrolase"/>
    <property type="match status" value="1"/>
</dbReference>
<dbReference type="Gene3D" id="3.40.50.1820">
    <property type="entry name" value="alpha/beta hydrolase"/>
    <property type="match status" value="1"/>
</dbReference>
<dbReference type="InterPro" id="IPR029058">
    <property type="entry name" value="AB_hydrolase_fold"/>
</dbReference>
<dbReference type="InterPro" id="IPR002018">
    <property type="entry name" value="CarbesteraseB"/>
</dbReference>
<dbReference type="InterPro" id="IPR019826">
    <property type="entry name" value="Carboxylesterase_B_AS"/>
</dbReference>
<dbReference type="InterPro" id="IPR050309">
    <property type="entry name" value="Type-B_Carboxylest/Lipase"/>
</dbReference>
<dbReference type="PANTHER" id="PTHR11559">
    <property type="entry name" value="CARBOXYLESTERASE"/>
    <property type="match status" value="1"/>
</dbReference>
<dbReference type="Pfam" id="PF00135">
    <property type="entry name" value="COesterase"/>
    <property type="match status" value="1"/>
</dbReference>
<dbReference type="SUPFAM" id="SSF53474">
    <property type="entry name" value="alpha/beta-Hydrolases"/>
    <property type="match status" value="1"/>
</dbReference>
<dbReference type="PROSITE" id="PS00122">
    <property type="entry name" value="CARBOXYLESTERASE_B_1"/>
    <property type="match status" value="1"/>
</dbReference>
<protein>
    <recommendedName>
        <fullName evidence="7">Secreted lipase 1</fullName>
    </recommendedName>
    <alternativeName>
        <fullName evidence="7">Carboxylesterase LIP1</fullName>
        <ecNumber evidence="4 5 6">3.1.1.1</ecNumber>
    </alternativeName>
</protein>
<keyword id="KW-1015">Disulfide bond</keyword>
<keyword id="KW-0325">Glycoprotein</keyword>
<keyword id="KW-0378">Hydrolase</keyword>
<keyword id="KW-0442">Lipid degradation</keyword>
<keyword id="KW-0443">Lipid metabolism</keyword>
<keyword id="KW-1185">Reference proteome</keyword>
<keyword id="KW-0964">Secreted</keyword>
<keyword id="KW-0732">Signal</keyword>
<proteinExistence type="evidence at protein level"/>
<name>LIP1_BOTFB</name>
<organism>
    <name type="scientific">Botryotinia fuckeliana (strain B05.10)</name>
    <name type="common">Noble rot fungus</name>
    <name type="synonym">Botrytis cinerea</name>
    <dbReference type="NCBI Taxonomy" id="332648"/>
    <lineage>
        <taxon>Eukaryota</taxon>
        <taxon>Fungi</taxon>
        <taxon>Dikarya</taxon>
        <taxon>Ascomycota</taxon>
        <taxon>Pezizomycotina</taxon>
        <taxon>Leotiomycetes</taxon>
        <taxon>Helotiales</taxon>
        <taxon>Sclerotiniaceae</taxon>
        <taxon>Botrytis</taxon>
    </lineage>
</organism>
<accession>Q5XTQ4</accession>
<accession>A0A384JTM0</accession>
<feature type="signal peptide" evidence="2">
    <location>
        <begin position="1"/>
        <end position="17"/>
    </location>
</feature>
<feature type="chain" id="PRO_5005143767" description="Secreted lipase 1" evidence="2">
    <location>
        <begin position="18"/>
        <end position="574"/>
    </location>
</feature>
<feature type="active site" description="Acyl-ester intermediate" evidence="4">
    <location>
        <position position="244"/>
    </location>
</feature>
<feature type="active site" description="Charge relay system" evidence="1">
    <location>
        <position position="376"/>
    </location>
</feature>
<feature type="active site" description="Charge relay system" evidence="1">
    <location>
        <position position="489"/>
    </location>
</feature>
<feature type="glycosylation site" description="N-linked (GlcNAc...) asparagine" evidence="3">
    <location>
        <position position="323"/>
    </location>
</feature>
<feature type="glycosylation site" description="N-linked (GlcNAc...) asparagine" evidence="3">
    <location>
        <position position="386"/>
    </location>
</feature>
<feature type="glycosylation site" description="N-linked (GlcNAc...) asparagine" evidence="3">
    <location>
        <position position="524"/>
    </location>
</feature>
<feature type="disulfide bond" evidence="1">
    <location>
        <begin position="95"/>
        <end position="132"/>
    </location>
</feature>
<feature type="disulfide bond" evidence="1">
    <location>
        <begin position="303"/>
        <end position="312"/>
    </location>
</feature>
<comment type="function">
    <text evidence="5 6">Secreted lipase that allows the use of hydrolyzed lipids as carbon sources (PubMed:20565655, PubMed:7609604). Has highest activity with methyl umbelliferyl oleate (C18:1), whereas much lower activities are obtained with the respective esters of palmitate (C16:0) and stearate (C18:0) (24% and 12% of the activity obtained with umbelliferyl oleate, respectively) (PubMed:20565655, PubMed:7609604). Hydrolyzes 1- and 3-positioned ester bonds in preference to 2-positioned ester bonds (PubMed:7609604). The production rate of monoglycerides is lower than that of diacylglycerides (PubMed:7609604). Seems not required for the penetration of intact host tissue (PubMed:20565655).</text>
</comment>
<comment type="catalytic activity">
    <reaction evidence="4 5 6">
        <text>a carboxylic ester + H2O = an alcohol + a carboxylate + H(+)</text>
        <dbReference type="Rhea" id="RHEA:21164"/>
        <dbReference type="ChEBI" id="CHEBI:15377"/>
        <dbReference type="ChEBI" id="CHEBI:15378"/>
        <dbReference type="ChEBI" id="CHEBI:29067"/>
        <dbReference type="ChEBI" id="CHEBI:30879"/>
        <dbReference type="ChEBI" id="CHEBI:33308"/>
        <dbReference type="EC" id="3.1.1.1"/>
    </reaction>
</comment>
<comment type="biophysicochemical properties">
    <phDependence>
        <text evidence="5 6">Optimum pH is 6.</text>
    </phDependence>
    <temperatureDependence>
        <text evidence="5 6">Optimum temperature is 38 degrees Celsius.</text>
    </temperatureDependence>
</comment>
<comment type="subcellular location">
    <subcellularLocation>
        <location evidence="5 6">Secreted</location>
    </subcellularLocation>
</comment>
<comment type="induction">
    <text evidence="5">Expression is repressed by glucose or other simple sugars such as sucrose, fructose, galactose and mannose.</text>
</comment>
<comment type="disruption phenotype">
    <text evidence="5">Impairs all extracellular esterase activity (PubMed:20565655). Does not affect host cuticle penetration (PubMed:20565655).</text>
</comment>
<comment type="similarity">
    <text evidence="8">Belongs to the type-B carboxylesterase/lipase family.</text>
</comment>